<name>TU57_IOTOL</name>
<sequence>LTCLTKMVECIQLPLDVEDSSDTLCC</sequence>
<proteinExistence type="evidence at transcript level"/>
<comment type="function">
    <text evidence="1">Acts as a neurotoxin by inhibiting an ion channel.</text>
</comment>
<comment type="subcellular location">
    <subcellularLocation>
        <location evidence="1">Secreted</location>
    </subcellularLocation>
</comment>
<comment type="tissue specificity">
    <text>Expressed by the venom duct.</text>
</comment>
<comment type="domain">
    <text>The cysteine framework is C-CC-C.</text>
</comment>
<comment type="PTM">
    <text evidence="1">Contains 2 disulfide bonds.</text>
</comment>
<organism>
    <name type="scientific">Iotyrris olangoensis</name>
    <name type="common">Sea snail</name>
    <name type="synonym">Lophiotoma olangoensis</name>
    <dbReference type="NCBI Taxonomy" id="2420066"/>
    <lineage>
        <taxon>Eukaryota</taxon>
        <taxon>Metazoa</taxon>
        <taxon>Spiralia</taxon>
        <taxon>Lophotrochozoa</taxon>
        <taxon>Mollusca</taxon>
        <taxon>Gastropoda</taxon>
        <taxon>Caenogastropoda</taxon>
        <taxon>Neogastropoda</taxon>
        <taxon>Conoidea</taxon>
        <taxon>Turridae</taxon>
        <taxon>Iotyrris</taxon>
    </lineage>
</organism>
<keyword id="KW-1015">Disulfide bond</keyword>
<keyword id="KW-0872">Ion channel impairing toxin</keyword>
<keyword id="KW-0528">Neurotoxin</keyword>
<keyword id="KW-0964">Secreted</keyword>
<keyword id="KW-0800">Toxin</keyword>
<accession>P0DKN6</accession>
<evidence type="ECO:0000250" key="1"/>
<reference key="1">
    <citation type="journal article" date="2006" name="J. Mol. Evol.">
        <title>Genes expressed in a turrid venom duct: divergence and similarity to conotoxins.</title>
        <authorList>
            <person name="Watkins M."/>
            <person name="Hillyard D.R."/>
            <person name="Olivera B.M."/>
        </authorList>
    </citation>
    <scope>NUCLEOTIDE SEQUENCE [MRNA]</scope>
    <source>
        <tissue>Venom duct</tissue>
    </source>
</reference>
<protein>
    <recommendedName>
        <fullName>Turripeptide OL57</fullName>
    </recommendedName>
</protein>
<dbReference type="GO" id="GO:0005576">
    <property type="term" value="C:extracellular region"/>
    <property type="evidence" value="ECO:0007669"/>
    <property type="project" value="UniProtKB-SubCell"/>
</dbReference>
<dbReference type="GO" id="GO:0099106">
    <property type="term" value="F:ion channel regulator activity"/>
    <property type="evidence" value="ECO:0007669"/>
    <property type="project" value="UniProtKB-KW"/>
</dbReference>
<dbReference type="GO" id="GO:0090729">
    <property type="term" value="F:toxin activity"/>
    <property type="evidence" value="ECO:0007669"/>
    <property type="project" value="UniProtKB-KW"/>
</dbReference>
<feature type="peptide" id="PRO_0000419852" description="Turripeptide OL57">
    <location>
        <begin position="1"/>
        <end position="26"/>
    </location>
</feature>